<name>RL29_PYRFU</name>
<comment type="subunit">
    <text evidence="2">Part of the 50S ribosomal subunit.</text>
</comment>
<comment type="similarity">
    <text evidence="1">Belongs to the universal ribosomal protein uL29 family.</text>
</comment>
<feature type="chain" id="PRO_0000130520" description="Large ribosomal subunit protein uL29">
    <location>
        <begin position="1"/>
        <end position="72"/>
    </location>
</feature>
<gene>
    <name evidence="1" type="primary">rpl29</name>
    <name type="ordered locus">PF1818</name>
</gene>
<organism>
    <name type="scientific">Pyrococcus furiosus (strain ATCC 43587 / DSM 3638 / JCM 8422 / Vc1)</name>
    <dbReference type="NCBI Taxonomy" id="186497"/>
    <lineage>
        <taxon>Archaea</taxon>
        <taxon>Methanobacteriati</taxon>
        <taxon>Methanobacteriota</taxon>
        <taxon>Thermococci</taxon>
        <taxon>Thermococcales</taxon>
        <taxon>Thermococcaceae</taxon>
        <taxon>Pyrococcus</taxon>
    </lineage>
</organism>
<dbReference type="EMBL" id="AE009950">
    <property type="protein sequence ID" value="AAL81942.1"/>
    <property type="molecule type" value="Genomic_DNA"/>
</dbReference>
<dbReference type="PDB" id="4V4N">
    <property type="method" value="EM"/>
    <property type="resolution" value="9.00 A"/>
    <property type="chains" value="W=1-72"/>
</dbReference>
<dbReference type="PDB" id="4V6U">
    <property type="method" value="EM"/>
    <property type="resolution" value="6.60 A"/>
    <property type="chains" value="BW=1-72"/>
</dbReference>
<dbReference type="PDBsum" id="4V4N"/>
<dbReference type="PDBsum" id="4V6U"/>
<dbReference type="SMR" id="Q8U005"/>
<dbReference type="STRING" id="186497.PF1818"/>
<dbReference type="PaxDb" id="186497-PF1818"/>
<dbReference type="KEGG" id="pfu:PF1818"/>
<dbReference type="PATRIC" id="fig|186497.12.peg.1889"/>
<dbReference type="eggNOG" id="arCOG00785">
    <property type="taxonomic scope" value="Archaea"/>
</dbReference>
<dbReference type="HOGENOM" id="CLU_158491_2_2_2"/>
<dbReference type="OrthoDB" id="11736at2157"/>
<dbReference type="PhylomeDB" id="Q8U005"/>
<dbReference type="Proteomes" id="UP000001013">
    <property type="component" value="Chromosome"/>
</dbReference>
<dbReference type="GO" id="GO:1990904">
    <property type="term" value="C:ribonucleoprotein complex"/>
    <property type="evidence" value="ECO:0007669"/>
    <property type="project" value="UniProtKB-KW"/>
</dbReference>
<dbReference type="GO" id="GO:0005840">
    <property type="term" value="C:ribosome"/>
    <property type="evidence" value="ECO:0007669"/>
    <property type="project" value="UniProtKB-KW"/>
</dbReference>
<dbReference type="GO" id="GO:0003735">
    <property type="term" value="F:structural constituent of ribosome"/>
    <property type="evidence" value="ECO:0007669"/>
    <property type="project" value="InterPro"/>
</dbReference>
<dbReference type="GO" id="GO:0006412">
    <property type="term" value="P:translation"/>
    <property type="evidence" value="ECO:0007669"/>
    <property type="project" value="UniProtKB-UniRule"/>
</dbReference>
<dbReference type="CDD" id="cd00427">
    <property type="entry name" value="Ribosomal_L29_HIP"/>
    <property type="match status" value="1"/>
</dbReference>
<dbReference type="Gene3D" id="1.10.287.310">
    <property type="match status" value="1"/>
</dbReference>
<dbReference type="HAMAP" id="MF_00374">
    <property type="entry name" value="Ribosomal_uL29"/>
    <property type="match status" value="1"/>
</dbReference>
<dbReference type="InterPro" id="IPR001854">
    <property type="entry name" value="Ribosomal_uL29"/>
</dbReference>
<dbReference type="InterPro" id="IPR018254">
    <property type="entry name" value="Ribosomal_uL29_CS"/>
</dbReference>
<dbReference type="InterPro" id="IPR036049">
    <property type="entry name" value="Ribosomal_uL29_sf"/>
</dbReference>
<dbReference type="NCBIfam" id="TIGR00012">
    <property type="entry name" value="L29"/>
    <property type="match status" value="1"/>
</dbReference>
<dbReference type="Pfam" id="PF00831">
    <property type="entry name" value="Ribosomal_L29"/>
    <property type="match status" value="1"/>
</dbReference>
<dbReference type="SUPFAM" id="SSF46561">
    <property type="entry name" value="Ribosomal protein L29 (L29p)"/>
    <property type="match status" value="1"/>
</dbReference>
<dbReference type="PROSITE" id="PS00579">
    <property type="entry name" value="RIBOSOMAL_L29"/>
    <property type="match status" value="1"/>
</dbReference>
<keyword id="KW-0002">3D-structure</keyword>
<keyword id="KW-1185">Reference proteome</keyword>
<keyword id="KW-0687">Ribonucleoprotein</keyword>
<keyword id="KW-0689">Ribosomal protein</keyword>
<reference key="1">
    <citation type="journal article" date="1999" name="Genetics">
        <title>Divergence of the hyperthermophilic archaea Pyrococcus furiosus and P. horikoshii inferred from complete genomic sequences.</title>
        <authorList>
            <person name="Maeder D.L."/>
            <person name="Weiss R.B."/>
            <person name="Dunn D.M."/>
            <person name="Cherry J.L."/>
            <person name="Gonzalez J.M."/>
            <person name="DiRuggiero J."/>
            <person name="Robb F.T."/>
        </authorList>
    </citation>
    <scope>NUCLEOTIDE SEQUENCE [LARGE SCALE GENOMIC DNA]</scope>
    <source>
        <strain>ATCC 43587 / DSM 3638 / JCM 8422 / Vc1</strain>
    </source>
</reference>
<reference evidence="3" key="2">
    <citation type="journal article" date="2013" name="Nucleic Acids Res.">
        <title>Promiscuous behaviour of archaeal ribosomal proteins: implications for eukaryotic ribosome evolution.</title>
        <authorList>
            <person name="Armache J.P."/>
            <person name="Anger A.M."/>
            <person name="Marquez V."/>
            <person name="Franckenberg S."/>
            <person name="Frohlich T."/>
            <person name="Villa E."/>
            <person name="Berninghausen O."/>
            <person name="Thomm M."/>
            <person name="Arnold G.J."/>
            <person name="Beckmann R."/>
            <person name="Wilson D.N."/>
        </authorList>
    </citation>
    <scope>STRUCTURE BY ELECTRON MICROSCOPY (6.60 ANGSTROMS) IN THE 70S RIBOSOME</scope>
    <scope>SUBUNIT</scope>
</reference>
<proteinExistence type="evidence at protein level"/>
<evidence type="ECO:0000255" key="1">
    <source>
        <dbReference type="HAMAP-Rule" id="MF_00374"/>
    </source>
</evidence>
<evidence type="ECO:0000269" key="2">
    <source>
    </source>
</evidence>
<evidence type="ECO:0007744" key="3">
    <source>
        <dbReference type="PDB" id="4V6U"/>
    </source>
</evidence>
<protein>
    <recommendedName>
        <fullName evidence="1">Large ribosomal subunit protein uL29</fullName>
    </recommendedName>
    <alternativeName>
        <fullName>50S ribosomal protein L29</fullName>
    </alternativeName>
</protein>
<accession>Q8U005</accession>
<sequence length="72" mass="8529">MKPSEIREMSIEEIDAKIRELRLQLAKERGLLTMGTSLENPMVIRNLRRDIARLLTIKKEKLREREKGKVKK</sequence>